<name>LPXA_BURL3</name>
<accession>Q39F55</accession>
<dbReference type="EC" id="2.3.1.129" evidence="1"/>
<dbReference type="EMBL" id="CP000151">
    <property type="protein sequence ID" value="ABB08911.1"/>
    <property type="molecule type" value="Genomic_DNA"/>
</dbReference>
<dbReference type="RefSeq" id="WP_011352449.1">
    <property type="nucleotide sequence ID" value="NC_007510.1"/>
</dbReference>
<dbReference type="SMR" id="Q39F55"/>
<dbReference type="GeneID" id="45095193"/>
<dbReference type="KEGG" id="bur:Bcep18194_A5317"/>
<dbReference type="PATRIC" id="fig|482957.22.peg.2266"/>
<dbReference type="HOGENOM" id="CLU_061249_0_0_4"/>
<dbReference type="UniPathway" id="UPA00359">
    <property type="reaction ID" value="UER00477"/>
</dbReference>
<dbReference type="Proteomes" id="UP000002705">
    <property type="component" value="Chromosome 1"/>
</dbReference>
<dbReference type="GO" id="GO:0005737">
    <property type="term" value="C:cytoplasm"/>
    <property type="evidence" value="ECO:0007669"/>
    <property type="project" value="UniProtKB-SubCell"/>
</dbReference>
<dbReference type="GO" id="GO:0016020">
    <property type="term" value="C:membrane"/>
    <property type="evidence" value="ECO:0007669"/>
    <property type="project" value="GOC"/>
</dbReference>
<dbReference type="GO" id="GO:0008780">
    <property type="term" value="F:acyl-[acyl-carrier-protein]-UDP-N-acetylglucosamine O-acyltransferase activity"/>
    <property type="evidence" value="ECO:0007669"/>
    <property type="project" value="UniProtKB-UniRule"/>
</dbReference>
<dbReference type="GO" id="GO:0009245">
    <property type="term" value="P:lipid A biosynthetic process"/>
    <property type="evidence" value="ECO:0007669"/>
    <property type="project" value="UniProtKB-UniRule"/>
</dbReference>
<dbReference type="CDD" id="cd03351">
    <property type="entry name" value="LbH_UDP-GlcNAc_AT"/>
    <property type="match status" value="1"/>
</dbReference>
<dbReference type="Gene3D" id="2.160.10.10">
    <property type="entry name" value="Hexapeptide repeat proteins"/>
    <property type="match status" value="1"/>
</dbReference>
<dbReference type="Gene3D" id="1.20.1180.10">
    <property type="entry name" value="Udp N-acetylglucosamine O-acyltransferase, C-terminal domain"/>
    <property type="match status" value="1"/>
</dbReference>
<dbReference type="HAMAP" id="MF_00387">
    <property type="entry name" value="LpxA"/>
    <property type="match status" value="1"/>
</dbReference>
<dbReference type="InterPro" id="IPR029098">
    <property type="entry name" value="Acetyltransf_C"/>
</dbReference>
<dbReference type="InterPro" id="IPR037157">
    <property type="entry name" value="Acetyltransf_C_sf"/>
</dbReference>
<dbReference type="InterPro" id="IPR001451">
    <property type="entry name" value="Hexapep"/>
</dbReference>
<dbReference type="InterPro" id="IPR010137">
    <property type="entry name" value="Lipid_A_LpxA"/>
</dbReference>
<dbReference type="InterPro" id="IPR011004">
    <property type="entry name" value="Trimer_LpxA-like_sf"/>
</dbReference>
<dbReference type="NCBIfam" id="TIGR01852">
    <property type="entry name" value="lipid_A_lpxA"/>
    <property type="match status" value="1"/>
</dbReference>
<dbReference type="NCBIfam" id="NF003657">
    <property type="entry name" value="PRK05289.1"/>
    <property type="match status" value="1"/>
</dbReference>
<dbReference type="PANTHER" id="PTHR43480">
    <property type="entry name" value="ACYL-[ACYL-CARRIER-PROTEIN]--UDP-N-ACETYLGLUCOSAMINE O-ACYLTRANSFERASE"/>
    <property type="match status" value="1"/>
</dbReference>
<dbReference type="PANTHER" id="PTHR43480:SF1">
    <property type="entry name" value="ACYL-[ACYL-CARRIER-PROTEIN]--UDP-N-ACETYLGLUCOSAMINE O-ACYLTRANSFERASE, MITOCHONDRIAL-RELATED"/>
    <property type="match status" value="1"/>
</dbReference>
<dbReference type="Pfam" id="PF13720">
    <property type="entry name" value="Acetyltransf_11"/>
    <property type="match status" value="1"/>
</dbReference>
<dbReference type="Pfam" id="PF00132">
    <property type="entry name" value="Hexapep"/>
    <property type="match status" value="2"/>
</dbReference>
<dbReference type="PIRSF" id="PIRSF000456">
    <property type="entry name" value="UDP-GlcNAc_acltr"/>
    <property type="match status" value="1"/>
</dbReference>
<dbReference type="SUPFAM" id="SSF51161">
    <property type="entry name" value="Trimeric LpxA-like enzymes"/>
    <property type="match status" value="1"/>
</dbReference>
<dbReference type="PROSITE" id="PS00101">
    <property type="entry name" value="HEXAPEP_TRANSFERASES"/>
    <property type="match status" value="1"/>
</dbReference>
<sequence>MTRIHPTAIVEPGAQIDESVEIGPYAIVGPHVTIGARTTIGSHSVIEGHTTLGEDNRIGHYASVGGRPQDMKYKDEPTKLVIGNRNTIREFTTIHTGTVQDVGVTTLGDDNWIMAYVHIGHDCTVGNHVILSSNAQMAGHVEIGDWAIVGGMSGVHQFVRIGAHSMLGGASALVQDIPPFVIAAGNKAEPHGINVEGLRRRGFSPDAISALRSAYRLLYKNGLSFEEAKVQLRELAAAGGEGDAAVKTLVEFIDASQRGIIR</sequence>
<keyword id="KW-0012">Acyltransferase</keyword>
<keyword id="KW-0963">Cytoplasm</keyword>
<keyword id="KW-0441">Lipid A biosynthesis</keyword>
<keyword id="KW-0444">Lipid biosynthesis</keyword>
<keyword id="KW-0443">Lipid metabolism</keyword>
<keyword id="KW-0677">Repeat</keyword>
<keyword id="KW-0808">Transferase</keyword>
<organism>
    <name type="scientific">Burkholderia lata (strain ATCC 17760 / DSM 23089 / LMG 22485 / NCIMB 9086 / R18194 / 383)</name>
    <dbReference type="NCBI Taxonomy" id="482957"/>
    <lineage>
        <taxon>Bacteria</taxon>
        <taxon>Pseudomonadati</taxon>
        <taxon>Pseudomonadota</taxon>
        <taxon>Betaproteobacteria</taxon>
        <taxon>Burkholderiales</taxon>
        <taxon>Burkholderiaceae</taxon>
        <taxon>Burkholderia</taxon>
        <taxon>Burkholderia cepacia complex</taxon>
    </lineage>
</organism>
<proteinExistence type="inferred from homology"/>
<evidence type="ECO:0000255" key="1">
    <source>
        <dbReference type="HAMAP-Rule" id="MF_00387"/>
    </source>
</evidence>
<reference key="1">
    <citation type="submission" date="2005-10" db="EMBL/GenBank/DDBJ databases">
        <title>Complete sequence of chromosome 1 of Burkholderia sp. 383.</title>
        <authorList>
            <consortium name="US DOE Joint Genome Institute"/>
            <person name="Copeland A."/>
            <person name="Lucas S."/>
            <person name="Lapidus A."/>
            <person name="Barry K."/>
            <person name="Detter J.C."/>
            <person name="Glavina T."/>
            <person name="Hammon N."/>
            <person name="Israni S."/>
            <person name="Pitluck S."/>
            <person name="Chain P."/>
            <person name="Malfatti S."/>
            <person name="Shin M."/>
            <person name="Vergez L."/>
            <person name="Schmutz J."/>
            <person name="Larimer F."/>
            <person name="Land M."/>
            <person name="Kyrpides N."/>
            <person name="Lykidis A."/>
            <person name="Richardson P."/>
        </authorList>
    </citation>
    <scope>NUCLEOTIDE SEQUENCE [LARGE SCALE GENOMIC DNA]</scope>
    <source>
        <strain>ATCC 17760 / DSM 23089 / LMG 22485 / NCIMB 9086 / R18194 / 383</strain>
    </source>
</reference>
<feature type="chain" id="PRO_1000013159" description="Acyl-[acyl-carrier-protein]--UDP-N-acetylglucosamine O-acyltransferase">
    <location>
        <begin position="1"/>
        <end position="262"/>
    </location>
</feature>
<protein>
    <recommendedName>
        <fullName evidence="1">Acyl-[acyl-carrier-protein]--UDP-N-acetylglucosamine O-acyltransferase</fullName>
        <shortName evidence="1">UDP-N-acetylglucosamine acyltransferase</shortName>
        <ecNumber evidence="1">2.3.1.129</ecNumber>
    </recommendedName>
</protein>
<gene>
    <name evidence="1" type="primary">lpxA</name>
    <name type="ordered locus">Bcep18194_A5317</name>
</gene>
<comment type="function">
    <text evidence="1">Involved in the biosynthesis of lipid A, a phosphorylated glycolipid that anchors the lipopolysaccharide to the outer membrane of the cell.</text>
</comment>
<comment type="catalytic activity">
    <reaction evidence="1">
        <text>a (3R)-hydroxyacyl-[ACP] + UDP-N-acetyl-alpha-D-glucosamine = a UDP-3-O-[(3R)-3-hydroxyacyl]-N-acetyl-alpha-D-glucosamine + holo-[ACP]</text>
        <dbReference type="Rhea" id="RHEA:67812"/>
        <dbReference type="Rhea" id="RHEA-COMP:9685"/>
        <dbReference type="Rhea" id="RHEA-COMP:9945"/>
        <dbReference type="ChEBI" id="CHEBI:57705"/>
        <dbReference type="ChEBI" id="CHEBI:64479"/>
        <dbReference type="ChEBI" id="CHEBI:78827"/>
        <dbReference type="ChEBI" id="CHEBI:173225"/>
        <dbReference type="EC" id="2.3.1.129"/>
    </reaction>
</comment>
<comment type="pathway">
    <text evidence="1">Glycolipid biosynthesis; lipid IV(A) biosynthesis; lipid IV(A) from (3R)-3-hydroxytetradecanoyl-[acyl-carrier-protein] and UDP-N-acetyl-alpha-D-glucosamine: step 1/6.</text>
</comment>
<comment type="subunit">
    <text evidence="1">Homotrimer.</text>
</comment>
<comment type="subcellular location">
    <subcellularLocation>
        <location evidence="1">Cytoplasm</location>
    </subcellularLocation>
</comment>
<comment type="similarity">
    <text evidence="1">Belongs to the transferase hexapeptide repeat family. LpxA subfamily.</text>
</comment>